<proteinExistence type="inferred from homology"/>
<comment type="function">
    <text evidence="1">Modulates transcription in response to changes in cellular NADH/NAD(+) redox state.</text>
</comment>
<comment type="subunit">
    <text evidence="1">Homodimer.</text>
</comment>
<comment type="subcellular location">
    <subcellularLocation>
        <location evidence="1">Cytoplasm</location>
    </subcellularLocation>
</comment>
<comment type="similarity">
    <text evidence="1">Belongs to the transcriptional regulatory Rex family.</text>
</comment>
<keyword id="KW-0963">Cytoplasm</keyword>
<keyword id="KW-0238">DNA-binding</keyword>
<keyword id="KW-0520">NAD</keyword>
<keyword id="KW-1185">Reference proteome</keyword>
<keyword id="KW-0678">Repressor</keyword>
<keyword id="KW-0804">Transcription</keyword>
<keyword id="KW-0805">Transcription regulation</keyword>
<reference key="1">
    <citation type="journal article" date="2008" name="J. Bacteriol.">
        <title>Complete genome sequence of Leuconostoc citreum KM20.</title>
        <authorList>
            <person name="Kim J.F."/>
            <person name="Jeong H."/>
            <person name="Lee J.-S."/>
            <person name="Choi S.-H."/>
            <person name="Ha M."/>
            <person name="Hur C.-G."/>
            <person name="Kim J.-S."/>
            <person name="Lee S."/>
            <person name="Park H.-S."/>
            <person name="Park Y.-H."/>
            <person name="Oh T.K."/>
        </authorList>
    </citation>
    <scope>NUCLEOTIDE SEQUENCE [LARGE SCALE GENOMIC DNA]</scope>
    <source>
        <strain>KM20</strain>
    </source>
</reference>
<name>REX_LEUCK</name>
<organism>
    <name type="scientific">Leuconostoc citreum (strain KM20)</name>
    <dbReference type="NCBI Taxonomy" id="349519"/>
    <lineage>
        <taxon>Bacteria</taxon>
        <taxon>Bacillati</taxon>
        <taxon>Bacillota</taxon>
        <taxon>Bacilli</taxon>
        <taxon>Lactobacillales</taxon>
        <taxon>Lactobacillaceae</taxon>
        <taxon>Leuconostoc</taxon>
    </lineage>
</organism>
<gene>
    <name evidence="1" type="primary">rex</name>
    <name type="ordered locus">LCK_01456</name>
</gene>
<evidence type="ECO:0000255" key="1">
    <source>
        <dbReference type="HAMAP-Rule" id="MF_01131"/>
    </source>
</evidence>
<accession>B1MVM6</accession>
<sequence>MTQQPKIPRATAKRLPIYFRYLTFLHDAGTDRISSAELSDAIKFDAATIRRDFSYFGALGKRGYGYDVKALLDFFANVLDQDSLINVALIGAGNLGQALLNFNFHQSSNMRISAAFDVDETRAGTIMAGVPIYAMSELTEQITAQRINIAILTVPQGVAQEITDKLVEAGIKGILNFTPLRVTVPNNVRVQNVDLTNELQTLVYFIDNYGSITTGL</sequence>
<feature type="chain" id="PRO_1000137328" description="Redox-sensing transcriptional repressor Rex">
    <location>
        <begin position="1"/>
        <end position="216"/>
    </location>
</feature>
<feature type="DNA-binding region" description="H-T-H motif" evidence="1">
    <location>
        <begin position="17"/>
        <end position="56"/>
    </location>
</feature>
<feature type="binding site" evidence="1">
    <location>
        <begin position="91"/>
        <end position="96"/>
    </location>
    <ligand>
        <name>NAD(+)</name>
        <dbReference type="ChEBI" id="CHEBI:57540"/>
    </ligand>
</feature>
<protein>
    <recommendedName>
        <fullName evidence="1">Redox-sensing transcriptional repressor Rex</fullName>
    </recommendedName>
</protein>
<dbReference type="EMBL" id="DQ489736">
    <property type="protein sequence ID" value="ACA83280.1"/>
    <property type="molecule type" value="Genomic_DNA"/>
</dbReference>
<dbReference type="RefSeq" id="WP_004899069.1">
    <property type="nucleotide sequence ID" value="NC_010471.1"/>
</dbReference>
<dbReference type="SMR" id="B1MVM6"/>
<dbReference type="STRING" id="349519.LCK_01456"/>
<dbReference type="KEGG" id="lci:LCK_01456"/>
<dbReference type="eggNOG" id="COG2344">
    <property type="taxonomic scope" value="Bacteria"/>
</dbReference>
<dbReference type="HOGENOM" id="CLU_061534_1_1_9"/>
<dbReference type="OrthoDB" id="9784760at2"/>
<dbReference type="Proteomes" id="UP000002166">
    <property type="component" value="Chromosome"/>
</dbReference>
<dbReference type="GO" id="GO:0005737">
    <property type="term" value="C:cytoplasm"/>
    <property type="evidence" value="ECO:0007669"/>
    <property type="project" value="UniProtKB-SubCell"/>
</dbReference>
<dbReference type="GO" id="GO:0003677">
    <property type="term" value="F:DNA binding"/>
    <property type="evidence" value="ECO:0007669"/>
    <property type="project" value="UniProtKB-UniRule"/>
</dbReference>
<dbReference type="GO" id="GO:0003700">
    <property type="term" value="F:DNA-binding transcription factor activity"/>
    <property type="evidence" value="ECO:0007669"/>
    <property type="project" value="UniProtKB-UniRule"/>
</dbReference>
<dbReference type="GO" id="GO:0045892">
    <property type="term" value="P:negative regulation of DNA-templated transcription"/>
    <property type="evidence" value="ECO:0007669"/>
    <property type="project" value="InterPro"/>
</dbReference>
<dbReference type="GO" id="GO:0051775">
    <property type="term" value="P:response to redox state"/>
    <property type="evidence" value="ECO:0007669"/>
    <property type="project" value="InterPro"/>
</dbReference>
<dbReference type="Gene3D" id="3.40.50.720">
    <property type="entry name" value="NAD(P)-binding Rossmann-like Domain"/>
    <property type="match status" value="1"/>
</dbReference>
<dbReference type="Gene3D" id="1.10.10.10">
    <property type="entry name" value="Winged helix-like DNA-binding domain superfamily/Winged helix DNA-binding domain"/>
    <property type="match status" value="1"/>
</dbReference>
<dbReference type="HAMAP" id="MF_01131">
    <property type="entry name" value="Rex"/>
    <property type="match status" value="1"/>
</dbReference>
<dbReference type="InterPro" id="IPR003781">
    <property type="entry name" value="CoA-bd"/>
</dbReference>
<dbReference type="InterPro" id="IPR036291">
    <property type="entry name" value="NAD(P)-bd_dom_sf"/>
</dbReference>
<dbReference type="InterPro" id="IPR009718">
    <property type="entry name" value="Rex_DNA-bd_C_dom"/>
</dbReference>
<dbReference type="InterPro" id="IPR022876">
    <property type="entry name" value="Tscrpt_rep_Rex"/>
</dbReference>
<dbReference type="InterPro" id="IPR036388">
    <property type="entry name" value="WH-like_DNA-bd_sf"/>
</dbReference>
<dbReference type="InterPro" id="IPR036390">
    <property type="entry name" value="WH_DNA-bd_sf"/>
</dbReference>
<dbReference type="NCBIfam" id="NF003989">
    <property type="entry name" value="PRK05472.1-3"/>
    <property type="match status" value="1"/>
</dbReference>
<dbReference type="NCBIfam" id="NF003991">
    <property type="entry name" value="PRK05472.1-5"/>
    <property type="match status" value="1"/>
</dbReference>
<dbReference type="NCBIfam" id="NF003994">
    <property type="entry name" value="PRK05472.2-3"/>
    <property type="match status" value="1"/>
</dbReference>
<dbReference type="NCBIfam" id="NF003995">
    <property type="entry name" value="PRK05472.2-4"/>
    <property type="match status" value="1"/>
</dbReference>
<dbReference type="NCBIfam" id="NF003996">
    <property type="entry name" value="PRK05472.2-5"/>
    <property type="match status" value="1"/>
</dbReference>
<dbReference type="PANTHER" id="PTHR35786">
    <property type="entry name" value="REDOX-SENSING TRANSCRIPTIONAL REPRESSOR REX"/>
    <property type="match status" value="1"/>
</dbReference>
<dbReference type="PANTHER" id="PTHR35786:SF1">
    <property type="entry name" value="REDOX-SENSING TRANSCRIPTIONAL REPRESSOR REX 1"/>
    <property type="match status" value="1"/>
</dbReference>
<dbReference type="Pfam" id="PF02629">
    <property type="entry name" value="CoA_binding"/>
    <property type="match status" value="1"/>
</dbReference>
<dbReference type="Pfam" id="PF06971">
    <property type="entry name" value="Put_DNA-bind_N"/>
    <property type="match status" value="1"/>
</dbReference>
<dbReference type="SMART" id="SM00881">
    <property type="entry name" value="CoA_binding"/>
    <property type="match status" value="1"/>
</dbReference>
<dbReference type="SUPFAM" id="SSF51735">
    <property type="entry name" value="NAD(P)-binding Rossmann-fold domains"/>
    <property type="match status" value="1"/>
</dbReference>
<dbReference type="SUPFAM" id="SSF46785">
    <property type="entry name" value="Winged helix' DNA-binding domain"/>
    <property type="match status" value="1"/>
</dbReference>